<organism>
    <name type="scientific">Macaca mulatta</name>
    <name type="common">Rhesus macaque</name>
    <dbReference type="NCBI Taxonomy" id="9544"/>
    <lineage>
        <taxon>Eukaryota</taxon>
        <taxon>Metazoa</taxon>
        <taxon>Chordata</taxon>
        <taxon>Craniata</taxon>
        <taxon>Vertebrata</taxon>
        <taxon>Euteleostomi</taxon>
        <taxon>Mammalia</taxon>
        <taxon>Eutheria</taxon>
        <taxon>Euarchontoglires</taxon>
        <taxon>Primates</taxon>
        <taxon>Haplorrhini</taxon>
        <taxon>Catarrhini</taxon>
        <taxon>Cercopithecidae</taxon>
        <taxon>Cercopithecinae</taxon>
        <taxon>Macaca</taxon>
    </lineage>
</organism>
<protein>
    <recommendedName>
        <fullName>Abnormal spindle-like microcephaly-associated protein homolog</fullName>
    </recommendedName>
</protein>
<evidence type="ECO:0000250" key="1"/>
<evidence type="ECO:0000250" key="2">
    <source>
        <dbReference type="UniProtKB" id="Q8IZT6"/>
    </source>
</evidence>
<evidence type="ECO:0000255" key="3"/>
<evidence type="ECO:0000255" key="4">
    <source>
        <dbReference type="PROSITE-ProRule" id="PRU00044"/>
    </source>
</evidence>
<evidence type="ECO:0000255" key="5">
    <source>
        <dbReference type="PROSITE-ProRule" id="PRU00116"/>
    </source>
</evidence>
<evidence type="ECO:0000256" key="6">
    <source>
        <dbReference type="SAM" id="MobiDB-lite"/>
    </source>
</evidence>
<comment type="function">
    <text evidence="1">Probable role in mitotic spindle regulation and coordination of mitotic processes. May have a preferential role in regulating neurogenesis (By similarity).</text>
</comment>
<comment type="subcellular location">
    <subcellularLocation>
        <location evidence="1">Cytoplasm</location>
    </subcellularLocation>
    <subcellularLocation>
        <location evidence="1">Cytoplasm</location>
        <location evidence="1">Cytoskeleton</location>
        <location evidence="1">Spindle</location>
    </subcellularLocation>
    <subcellularLocation>
        <location evidence="1">Nucleus</location>
    </subcellularLocation>
    <text evidence="1">The nuclear-cytoplasmic distribution could be regulated by the availability of calmodulin. Localizes to spindle poles during mitosis (By similarity).</text>
</comment>
<dbReference type="EMBL" id="AY497013">
    <property type="protein sequence ID" value="AAS48529.1"/>
    <property type="molecule type" value="Genomic_DNA"/>
</dbReference>
<dbReference type="RefSeq" id="NP_001098005.1">
    <property type="nucleotide sequence ID" value="NM_001104535.1"/>
</dbReference>
<dbReference type="SMR" id="P62292"/>
<dbReference type="FunCoup" id="P62292">
    <property type="interactions" value="1066"/>
</dbReference>
<dbReference type="STRING" id="9544.ENSMMUP00000000338"/>
<dbReference type="PaxDb" id="9544-ENSMMUP00000000338"/>
<dbReference type="GeneID" id="711153"/>
<dbReference type="KEGG" id="mcc:711153"/>
<dbReference type="CTD" id="259266"/>
<dbReference type="eggNOG" id="KOG0165">
    <property type="taxonomic scope" value="Eukaryota"/>
</dbReference>
<dbReference type="InParanoid" id="P62292"/>
<dbReference type="OrthoDB" id="2148418at2759"/>
<dbReference type="Proteomes" id="UP000006718">
    <property type="component" value="Unassembled WGS sequence"/>
</dbReference>
<dbReference type="GO" id="GO:0005737">
    <property type="term" value="C:cytoplasm"/>
    <property type="evidence" value="ECO:0007669"/>
    <property type="project" value="UniProtKB-SubCell"/>
</dbReference>
<dbReference type="GO" id="GO:0005634">
    <property type="term" value="C:nucleus"/>
    <property type="evidence" value="ECO:0007669"/>
    <property type="project" value="UniProtKB-SubCell"/>
</dbReference>
<dbReference type="GO" id="GO:0005819">
    <property type="term" value="C:spindle"/>
    <property type="evidence" value="ECO:0007669"/>
    <property type="project" value="UniProtKB-SubCell"/>
</dbReference>
<dbReference type="GO" id="GO:0005516">
    <property type="term" value="F:calmodulin binding"/>
    <property type="evidence" value="ECO:0007669"/>
    <property type="project" value="UniProtKB-KW"/>
</dbReference>
<dbReference type="GO" id="GO:0051301">
    <property type="term" value="P:cell division"/>
    <property type="evidence" value="ECO:0007669"/>
    <property type="project" value="UniProtKB-KW"/>
</dbReference>
<dbReference type="CDD" id="cd21223">
    <property type="entry name" value="CH_ASPM_rpt1"/>
    <property type="match status" value="1"/>
</dbReference>
<dbReference type="CDD" id="cd21224">
    <property type="entry name" value="CH_ASPM_rpt2"/>
    <property type="match status" value="1"/>
</dbReference>
<dbReference type="FunFam" id="1.20.5.190:FF:000052">
    <property type="entry name" value="Abnormal spindle-like microcephaly-associated protein"/>
    <property type="match status" value="1"/>
</dbReference>
<dbReference type="FunFam" id="1.10.418.10:FF:000051">
    <property type="entry name" value="Abnormal spindle-like microcephaly-associated protein homolog"/>
    <property type="match status" value="1"/>
</dbReference>
<dbReference type="FunFam" id="1.20.5.190:FF:000008">
    <property type="entry name" value="Abnormal spindle-like microcephaly-associated protein homolog"/>
    <property type="match status" value="5"/>
</dbReference>
<dbReference type="FunFam" id="1.20.5.190:FF:000009">
    <property type="entry name" value="Abnormal spindle-like microcephaly-associated protein homolog"/>
    <property type="match status" value="4"/>
</dbReference>
<dbReference type="FunFam" id="1.20.5.190:FF:000010">
    <property type="entry name" value="Abnormal spindle-like microcephaly-associated protein homolog"/>
    <property type="match status" value="2"/>
</dbReference>
<dbReference type="FunFam" id="1.20.5.190:FF:000016">
    <property type="entry name" value="Abnormal spindle-like microcephaly-associated protein homolog"/>
    <property type="match status" value="1"/>
</dbReference>
<dbReference type="FunFam" id="1.20.5.190:FF:000023">
    <property type="entry name" value="Abnormal spindle-like microcephaly-associated protein homolog"/>
    <property type="match status" value="1"/>
</dbReference>
<dbReference type="FunFam" id="1.20.5.190:FF:000028">
    <property type="entry name" value="Abnormal spindle-like microcephaly-associated protein homolog"/>
    <property type="match status" value="1"/>
</dbReference>
<dbReference type="FunFam" id="1.20.5.190:FF:000029">
    <property type="entry name" value="Abnormal spindle-like microcephaly-associated protein homolog"/>
    <property type="match status" value="1"/>
</dbReference>
<dbReference type="FunFam" id="1.20.5.190:FF:000030">
    <property type="entry name" value="Abnormal spindle-like microcephaly-associated protein homolog"/>
    <property type="match status" value="1"/>
</dbReference>
<dbReference type="FunFam" id="1.20.5.190:FF:000031">
    <property type="entry name" value="Abnormal spindle-like microcephaly-associated protein homolog"/>
    <property type="match status" value="1"/>
</dbReference>
<dbReference type="FunFam" id="1.20.5.190:FF:000032">
    <property type="entry name" value="Abnormal spindle-like microcephaly-associated protein homolog"/>
    <property type="match status" value="1"/>
</dbReference>
<dbReference type="FunFam" id="1.20.5.190:FF:000034">
    <property type="entry name" value="Abnormal spindle-like microcephaly-associated protein homolog"/>
    <property type="match status" value="1"/>
</dbReference>
<dbReference type="FunFam" id="1.20.5.190:FF:000035">
    <property type="entry name" value="Abnormal spindle-like microcephaly-associated protein homolog"/>
    <property type="match status" value="1"/>
</dbReference>
<dbReference type="FunFam" id="1.20.5.190:FF:000046">
    <property type="entry name" value="Abnormal spindle-like microcephaly-associated protein homolog"/>
    <property type="match status" value="1"/>
</dbReference>
<dbReference type="FunFam" id="1.20.5.190:FF:000053">
    <property type="entry name" value="Abnormal spindle-like microcephaly-associated protein homolog"/>
    <property type="match status" value="1"/>
</dbReference>
<dbReference type="FunFam" id="1.20.5.190:FF:000059">
    <property type="entry name" value="Abnormal spindle-like microcephaly-associated protein homolog"/>
    <property type="match status" value="1"/>
</dbReference>
<dbReference type="FunFam" id="2.60.40.10:FF:001429">
    <property type="entry name" value="Abnormal spindle-like microcephaly-associated protein homolog"/>
    <property type="match status" value="1"/>
</dbReference>
<dbReference type="Gene3D" id="1.20.5.190">
    <property type="match status" value="33"/>
</dbReference>
<dbReference type="Gene3D" id="1.10.418.10">
    <property type="entry name" value="Calponin-like domain"/>
    <property type="match status" value="2"/>
</dbReference>
<dbReference type="Gene3D" id="2.60.40.10">
    <property type="entry name" value="Immunoglobulins"/>
    <property type="match status" value="1"/>
</dbReference>
<dbReference type="Gene3D" id="1.25.10.10">
    <property type="entry name" value="Leucine-rich Repeat Variant"/>
    <property type="match status" value="1"/>
</dbReference>
<dbReference type="InterPro" id="IPR011989">
    <property type="entry name" value="ARM-like"/>
</dbReference>
<dbReference type="InterPro" id="IPR016024">
    <property type="entry name" value="ARM-type_fold"/>
</dbReference>
<dbReference type="InterPro" id="IPR031549">
    <property type="entry name" value="ASH"/>
</dbReference>
<dbReference type="InterPro" id="IPR051185">
    <property type="entry name" value="ASPM"/>
</dbReference>
<dbReference type="InterPro" id="IPR001715">
    <property type="entry name" value="CH_dom"/>
</dbReference>
<dbReference type="InterPro" id="IPR036872">
    <property type="entry name" value="CH_dom_sf"/>
</dbReference>
<dbReference type="InterPro" id="IPR013783">
    <property type="entry name" value="Ig-like_fold"/>
</dbReference>
<dbReference type="InterPro" id="IPR000048">
    <property type="entry name" value="IQ_motif_EF-hand-BS"/>
</dbReference>
<dbReference type="InterPro" id="IPR027417">
    <property type="entry name" value="P-loop_NTPase"/>
</dbReference>
<dbReference type="PANTHER" id="PTHR22706">
    <property type="entry name" value="ASSEMBLY FACTOR FOR SPINDLE MICROTUBULES"/>
    <property type="match status" value="1"/>
</dbReference>
<dbReference type="PANTHER" id="PTHR22706:SF1">
    <property type="entry name" value="ASSEMBLY FACTOR FOR SPINDLE MICROTUBULES"/>
    <property type="match status" value="1"/>
</dbReference>
<dbReference type="Pfam" id="PF15780">
    <property type="entry name" value="ASH"/>
    <property type="match status" value="1"/>
</dbReference>
<dbReference type="Pfam" id="PF00307">
    <property type="entry name" value="CH"/>
    <property type="match status" value="1"/>
</dbReference>
<dbReference type="Pfam" id="PF00612">
    <property type="entry name" value="IQ"/>
    <property type="match status" value="40"/>
</dbReference>
<dbReference type="SMART" id="SM00033">
    <property type="entry name" value="CH"/>
    <property type="match status" value="1"/>
</dbReference>
<dbReference type="SMART" id="SM00015">
    <property type="entry name" value="IQ"/>
    <property type="match status" value="66"/>
</dbReference>
<dbReference type="SUPFAM" id="SSF48371">
    <property type="entry name" value="ARM repeat"/>
    <property type="match status" value="1"/>
</dbReference>
<dbReference type="SUPFAM" id="SSF47576">
    <property type="entry name" value="Calponin-homology domain, CH-domain"/>
    <property type="match status" value="1"/>
</dbReference>
<dbReference type="SUPFAM" id="SSF52540">
    <property type="entry name" value="P-loop containing nucleoside triphosphate hydrolases"/>
    <property type="match status" value="17"/>
</dbReference>
<dbReference type="PROSITE" id="PS50021">
    <property type="entry name" value="CH"/>
    <property type="match status" value="2"/>
</dbReference>
<dbReference type="PROSITE" id="PS50096">
    <property type="entry name" value="IQ"/>
    <property type="match status" value="37"/>
</dbReference>
<name>ASPM_MACMU</name>
<feature type="chain" id="PRO_0000191335" description="Abnormal spindle-like microcephaly-associated protein homolog">
    <location>
        <begin position="1"/>
        <end position="3479"/>
    </location>
</feature>
<feature type="domain" description="Calponin-homology (CH) 1" evidence="4">
    <location>
        <begin position="920"/>
        <end position="1056"/>
    </location>
</feature>
<feature type="domain" description="Calponin-homology (CH) 2" evidence="4">
    <location>
        <begin position="1110"/>
        <end position="1261"/>
    </location>
</feature>
<feature type="domain" description="IQ 1" evidence="5">
    <location>
        <begin position="1347"/>
        <end position="1378"/>
    </location>
</feature>
<feature type="domain" description="IQ 2" evidence="5">
    <location>
        <begin position="1393"/>
        <end position="1422"/>
    </location>
</feature>
<feature type="domain" description="IQ 3" evidence="5">
    <location>
        <begin position="1582"/>
        <end position="1613"/>
    </location>
</feature>
<feature type="domain" description="IQ 4" evidence="5">
    <location>
        <begin position="1605"/>
        <end position="1634"/>
    </location>
</feature>
<feature type="domain" description="IQ 5" evidence="5">
    <location>
        <begin position="1632"/>
        <end position="1661"/>
    </location>
</feature>
<feature type="domain" description="IQ 6" evidence="5">
    <location>
        <begin position="1655"/>
        <end position="1684"/>
    </location>
</feature>
<feature type="domain" description="IQ 7" evidence="5">
    <location>
        <begin position="1728"/>
        <end position="1757"/>
    </location>
</feature>
<feature type="domain" description="IQ 8" evidence="5">
    <location>
        <begin position="1751"/>
        <end position="1782"/>
    </location>
</feature>
<feature type="domain" description="IQ 9" evidence="5">
    <location>
        <begin position="1801"/>
        <end position="1830"/>
    </location>
</feature>
<feature type="domain" description="IQ 10" evidence="5">
    <location>
        <begin position="1824"/>
        <end position="1853"/>
    </location>
</feature>
<feature type="domain" description="IQ 11" evidence="5">
    <location>
        <begin position="1874"/>
        <end position="1903"/>
    </location>
</feature>
<feature type="domain" description="IQ 12" evidence="5">
    <location>
        <begin position="1897"/>
        <end position="1928"/>
    </location>
</feature>
<feature type="domain" description="IQ 13" evidence="5">
    <location>
        <begin position="1947"/>
        <end position="1978"/>
    </location>
</feature>
<feature type="domain" description="IQ 14" evidence="5">
    <location>
        <begin position="1970"/>
        <end position="2001"/>
    </location>
</feature>
<feature type="domain" description="IQ 15" evidence="5">
    <location>
        <begin position="2020"/>
        <end position="2049"/>
    </location>
</feature>
<feature type="domain" description="IQ 16" evidence="5">
    <location>
        <begin position="2043"/>
        <end position="2074"/>
    </location>
</feature>
<feature type="domain" description="IQ 17" evidence="5">
    <location>
        <begin position="2093"/>
        <end position="2124"/>
    </location>
</feature>
<feature type="domain" description="IQ 18" evidence="5">
    <location>
        <begin position="2116"/>
        <end position="2147"/>
    </location>
</feature>
<feature type="domain" description="IQ 19" evidence="5">
    <location>
        <begin position="2239"/>
        <end position="2270"/>
    </location>
</feature>
<feature type="domain" description="IQ 20" evidence="5">
    <location>
        <begin position="2262"/>
        <end position="2293"/>
    </location>
</feature>
<feature type="domain" description="IQ 21" evidence="5">
    <location>
        <begin position="2311"/>
        <end position="2342"/>
    </location>
</feature>
<feature type="domain" description="IQ 22" evidence="5">
    <location>
        <begin position="2334"/>
        <end position="2365"/>
    </location>
</feature>
<feature type="domain" description="IQ 23" evidence="5">
    <location>
        <begin position="2384"/>
        <end position="2415"/>
    </location>
</feature>
<feature type="domain" description="IQ 24" evidence="5">
    <location>
        <begin position="2407"/>
        <end position="2438"/>
    </location>
</feature>
<feature type="domain" description="IQ 25" evidence="5">
    <location>
        <begin position="2533"/>
        <end position="2564"/>
    </location>
</feature>
<feature type="domain" description="IQ 26" evidence="5">
    <location>
        <begin position="2627"/>
        <end position="2656"/>
    </location>
</feature>
<feature type="domain" description="IQ 27" evidence="5">
    <location>
        <begin position="2668"/>
        <end position="2699"/>
    </location>
</feature>
<feature type="domain" description="IQ 28" evidence="5">
    <location>
        <begin position="2691"/>
        <end position="2722"/>
    </location>
</feature>
<feature type="domain" description="IQ 29" evidence="5">
    <location>
        <begin position="2741"/>
        <end position="2770"/>
    </location>
</feature>
<feature type="domain" description="IQ 30" evidence="5">
    <location>
        <begin position="2817"/>
        <end position="2848"/>
    </location>
</feature>
<feature type="domain" description="IQ 31" evidence="5">
    <location>
        <begin position="2862"/>
        <end position="2893"/>
    </location>
</feature>
<feature type="domain" description="IQ 32" evidence="5">
    <location>
        <begin position="2912"/>
        <end position="2941"/>
    </location>
</feature>
<feature type="domain" description="IQ 33" evidence="5">
    <location>
        <begin position="2935"/>
        <end position="2966"/>
    </location>
</feature>
<feature type="domain" description="IQ 34" evidence="5">
    <location>
        <begin position="2957"/>
        <end position="2988"/>
    </location>
</feature>
<feature type="domain" description="IQ 35" evidence="5">
    <location>
        <begin position="3032"/>
        <end position="3063"/>
    </location>
</feature>
<feature type="domain" description="IQ 36" evidence="5">
    <location>
        <begin position="3082"/>
        <end position="3113"/>
    </location>
</feature>
<feature type="domain" description="IQ 37" evidence="5">
    <location>
        <begin position="3206"/>
        <end position="3237"/>
    </location>
</feature>
<feature type="region of interest" description="Disordered" evidence="6">
    <location>
        <begin position="1"/>
        <end position="29"/>
    </location>
</feature>
<feature type="coiled-coil region" evidence="3">
    <location>
        <begin position="1057"/>
        <end position="1078"/>
    </location>
</feature>
<feature type="modified residue" description="Phosphoserine" evidence="2">
    <location>
        <position position="280"/>
    </location>
</feature>
<feature type="modified residue" description="Phosphoserine" evidence="2">
    <location>
        <position position="283"/>
    </location>
</feature>
<feature type="modified residue" description="Phosphoserine" evidence="2">
    <location>
        <position position="367"/>
    </location>
</feature>
<feature type="modified residue" description="Phosphoserine" evidence="2">
    <location>
        <position position="392"/>
    </location>
</feature>
<feature type="modified residue" description="Phosphoserine" evidence="2">
    <location>
        <position position="425"/>
    </location>
</feature>
<feature type="modified residue" description="Phosphoserine" evidence="2">
    <location>
        <position position="605"/>
    </location>
</feature>
<feature type="modified residue" description="Phosphoserine" evidence="2">
    <location>
        <position position="1103"/>
    </location>
</feature>
<gene>
    <name type="primary">ASPM</name>
</gene>
<accession>P62292</accession>
<reference key="1">
    <citation type="journal article" date="2004" name="PLoS Biol.">
        <title>Accelerated evolution of the ASPM gene controlling brain size begins prior to human brain expansion.</title>
        <authorList>
            <person name="Kouprina N."/>
            <person name="Pavlicek A."/>
            <person name="Mochida G.H."/>
            <person name="Solomon G."/>
            <person name="Gersch W."/>
            <person name="Yoon Y.-H."/>
            <person name="Collura R."/>
            <person name="Ruvolo M."/>
            <person name="Barrett J.C."/>
            <person name="Woods C.G."/>
            <person name="Walsh C.A."/>
            <person name="Jurka J."/>
            <person name="Larionov V."/>
        </authorList>
    </citation>
    <scope>NUCLEOTIDE SEQUENCE [GENOMIC DNA]</scope>
</reference>
<keyword id="KW-0112">Calmodulin-binding</keyword>
<keyword id="KW-0131">Cell cycle</keyword>
<keyword id="KW-0132">Cell division</keyword>
<keyword id="KW-0175">Coiled coil</keyword>
<keyword id="KW-0963">Cytoplasm</keyword>
<keyword id="KW-0206">Cytoskeleton</keyword>
<keyword id="KW-0498">Mitosis</keyword>
<keyword id="KW-0539">Nucleus</keyword>
<keyword id="KW-0597">Phosphoprotein</keyword>
<keyword id="KW-1185">Reference proteome</keyword>
<keyword id="KW-0677">Repeat</keyword>
<sequence length="3479" mass="410106">MANRRVGRGCWEVSPTERRPPAALRGPATEEEASSPPVLFLSHFCRSPFLCFGDVLLGDSRTLPLALDNPNEEVAEVKISHFPAADLGFSVSQRCFVLQPKEKIVISVNWTPFKEGRVREIMTFLVNDVLKHQAILLGNAEKQKKKKRSLWDTIKKKKISASTSHNRRVSNIQNVNKTFSVSQKVDRVRSPLQACENLAMNEGGPPTENNSLTLEENKIPISPISPAFNECHGATCLPLSVRRSTTYSSLHASENRELLNVDSANVSKVSFNEKAVTETSFNSINVNDQSGENSKLILTPNYSSTLNITQSQINFLSPDSFVNNSHGANNELELVTCLSSDMFMTDNSKPVHLQSTTAHEIYQKILSPDSFIKDNYGLNQDLESESVNPILSPNQFLKDNMAYMCTSQQTYKVPLSNENSQVPQSPQDWSKSEVSPCIPEYQGSKSPKAIFEELVEMKSNYYSFIKQNNPKFSAVQDISSHSHDKQPKRRPILSATVTKRKPTCTRENQTEINKPKAKRCLNSAVGEHEKVIHNQKEKEDFHSYLPVIDPVLSKSKSYKNQIMPSLTTASVARKRKSDGSMEDANVRVAVTEHTEEREIKRIHFSPSEPKTSAVKKTKNVITPISKCISNREKLNLKKKTDLLIFKTPISKTSKRTKPIIAVAQSNLTFIKPLKTDIPRHPMPFAAKNMFYDERWKEKQEQGFTWWLNFILTPDDFTVKTNISEVNAATLLLGVENQHKISVPRAPTKEEMSLRAYTARCRLNRLRRAACRLFTSEKMVKAIKKLEIEIEARRLIVRKDRHLWKDVGERQKVLNWLLSYNPLWLRIGLETIYGELISLEDNSDVTGLAMFILNRLLWNPDIAAEYRHPTVPHLYRDGHEGALSKFTLKKLLLLICFLDYAKISKLIDHDPCLFCKDAEFKASKEILLAFSRDFLSGEGDLSRHLGLLGLPVNHVQTPFDEFDFAITNLAVDLQCGVRLVRTMELLTQNWNLSKKLRIPAISRLQKMHNVDIVLQVLKSRGIELSDEHGNTILSKDIVDRHREKTLRLLWKIAFAFQVDISLNLDQLKEEIAFLKHTKSIKKTISLLSCHSDALINKKKGKRDSGSFEQYSENIKLLMDWVNAVCAFYNKKVENFTVSFSDGRVLCYLIHHYHPCYVPFDAICQRTTQTVECTQTGSVVLNSSSESDDSSLDMSLKAFDHENTSELYKELLENEKKNFQLIRSAVRDLGGIPAMINHSDMSNTIPDEKVVITYLSFLCARLLDLRKEIRAARLIQTTWRKYKLKTDLKRHQERDKAARIIQSAVINFLAKQRLRKRVNAALIIQKYWRRVLAQRKLLILKKEKLEKVQNKAASLIQGYWRRYSTRKRFLKLKYYSIILQSRIRMIIAVTSYKRYLWATVTIQRHWRAYLRRKQDQQRYEMLKSSSLIIQSMFRKWKRRKMQSQVKATVILQRAFREWHLRKRAKEENSAIVIQSWYRMHKELRKYIYIRSCVIVIQKRFRCFQAQKLYKRKKESILTIQKYYKAYLKGKIERTNYLQKRAAAIQLQAAFRRLKAHNLCRQIRAACVIQSYWRMRQDRVRFLNLKKTIIKLQAHIRKHQQLQKYKKMKKAAVIIQTHFRAYIFTRKVLASYQKTRSAVIVLQSAYRGMQARKVYIHILTSVIKIQSYYRAYVSKKEFLSLKNTTIKLQSIVKMKQTRKQYLHLRAAALFIQQCYRSKKITTQKREEYMQMRESCIKLQAFVRGYLVRKQMRLQRKAVISLQSYFRMRKARQYYLKMCKAIMVIQNYYHAYKAQVNQRKNFLRVKKAATCLQAAYRGYKVRQLIKQQSIAALKIQSAFRGYNKRVKYQSVLQSIIKIQRWYRAYKTLHDTRTHFLKTKAAVVSLQSAYRGWKVRKQIRREHQAALKIQSAFRMAKAQKQFRLFKTAALVIQQNFRAWTAGRKQRMEYIELRHAVLILQSMWKGKTLRRQLQRQHKCAIIIQSYYRMHVQQKKWKIMKKAALLIQKYYKAYSIGREQHHLYLKTKAAVVTLQSAYRGMKVRKRIKDCNKAAVTIQSKYRAYKTKKKYATYRASAIIIQRWYRGIKITHRQHQEYLNLKKTAIKIQSVYRGIRVRRHIQHMHRAATFIKAMFKMHQSRISYHTMRKAAIVIQVRFRAYYQGKMHREKYLTILKAVKILQASFRGVRVRWTLRKMQIAATLIQSNYRRYKQQTYFNKLKKITKTIQQRYRAVKERNIQFKRYNKLRHSVIYIQAIFRGKKARRHLKMMHVAATLIQRRFRTLMMRRRFLSLKKTAVWIQRKYRAHLCTKHHLQFLQVQNAVIKIQSSYRRWMIRKKMREMHRAATFIQATFRMHRVHMRYQALKQASVVIQQQYRANRAAKLQRQHYLRQRRSAVILQAAFRGVKTRRHLKSMHSSATLIQSRFRSLLVRRRFISLKKATIFVQRKYRATICAKHKLHQFLQLRKAAITIQSSYCTIRRLMVKKKLQEMQRAAVLIQATFRMHRTCVTFQTWKQASILIQQHYRTYRAAKLQKENYIRQWHSAVVIQTAYKGMKARQHLREKHKAAIIIQSTYRMYRQYCFYQKLQWATKIIQEKYRANKKKQKALQHNELKKETCVQASFQDMNIQKQIQEQHQAAIIIQKHCKAFKIRKHYLHLRATVVSIQRRYRKLTAVRTQAVICIQSYYRGFKVRRDIQNMHRAATLIQSFYRMHRAKVDYQTKKTAIVVIQNYYRLYVRVKTERKSFLPVQKSVRTIQAAFRGMKVRQKLKIVSEEKMAAIVNQSALCCYRSKTQYEAVQSEGVMIQEWYKASDLACSQEAECHSQSRAAVTIQNAFRRMVTRKLETQKCAALRIQFFLQMAVYRRRFVQQKRAAITLQHYFRTWQTRKQFLLYRKAAVVLQNHYRAFLSAKHQRQVYLQIRSSVIIIQARSKGFIQKRKFQEIKNSTIKIQAMWRRYRAKKYLCKVKAACKIQAWYRCWRAHKEYLAILKAVKIIQGCFYTKLERTWFLNVRASAIIIQRKWRAILSAKIAHEHFLMIKRHRAACLIQAHYRGYKERQVFLRQKSAALIIQKYIRAREAGKRERIKYIEFKKSTVILQALVRGWLVRKRILEQKTKIRLLHFTAAAYYHLNALRIQRAYKLYLAVKNANKQVNSVICIQRWFRARLQQKKFIQKYSIKKIEHEGQECLSQQNRAASVIQKAVRHFVLRKKQEKFTSGIIKIQALWRGYSWRKKNDCTKIKAIRLSLQVVNREIREENKLYKRTALALHYLLTYKHLSAILEALKHLEVVTRLSPLCCENMAQSGAISKIFVLIRSCNRSVPCMEVIRYAVQVLLNVSKYEKTTSAVYDVENCIDTLLELLQIYREKPGNKVADKGGSIFTKTCCLLAVLLKTTNRASDVRSRSKVVDRIYSLYKLTAHKHKMNTERILHKQKKNSSISIPFIPETPVRTRIVSRLKPDWVLRRDNMEEITNPLQAIQMVMDTLGIPY</sequence>
<proteinExistence type="inferred from homology"/>